<name>DGOD_SALNS</name>
<accession>B4SY97</accession>
<gene>
    <name evidence="2" type="primary">dgoD</name>
    <name type="ordered locus">SNSL254_A4112</name>
</gene>
<comment type="function">
    <text evidence="2">Catalyzes the dehydration of D-galactonate to 2-keto-3-deoxy-D-galactonate.</text>
</comment>
<comment type="catalytic activity">
    <reaction evidence="2">
        <text>D-galactonate = 2-dehydro-3-deoxy-D-galactonate + H2O</text>
        <dbReference type="Rhea" id="RHEA:18649"/>
        <dbReference type="ChEBI" id="CHEBI:12931"/>
        <dbReference type="ChEBI" id="CHEBI:15377"/>
        <dbReference type="ChEBI" id="CHEBI:57989"/>
        <dbReference type="EC" id="4.2.1.6"/>
    </reaction>
</comment>
<comment type="cofactor">
    <cofactor evidence="2">
        <name>Mg(2+)</name>
        <dbReference type="ChEBI" id="CHEBI:18420"/>
    </cofactor>
    <text evidence="2">Binds 1 Mg(2+) ion per subunit.</text>
</comment>
<comment type="pathway">
    <text evidence="2">Carbohydrate acid metabolism; D-galactonate degradation; D-glyceraldehyde 3-phosphate and pyruvate from D-galactonate: step 1/3.</text>
</comment>
<comment type="miscellaneous">
    <text evidence="2">Reaction proceeds via an anti dehydration.</text>
</comment>
<comment type="similarity">
    <text evidence="2">Belongs to the mandelate racemase/muconate lactonizing enzyme family. GalD subfamily.</text>
</comment>
<dbReference type="EC" id="4.2.1.6" evidence="2"/>
<dbReference type="EMBL" id="CP001113">
    <property type="protein sequence ID" value="ACF61964.1"/>
    <property type="molecule type" value="Genomic_DNA"/>
</dbReference>
<dbReference type="RefSeq" id="WP_000704735.1">
    <property type="nucleotide sequence ID" value="NZ_CCMR01000001.1"/>
</dbReference>
<dbReference type="SMR" id="B4SY97"/>
<dbReference type="KEGG" id="see:SNSL254_A4112"/>
<dbReference type="HOGENOM" id="CLU_030273_3_2_6"/>
<dbReference type="UniPathway" id="UPA00081">
    <property type="reaction ID" value="UER00518"/>
</dbReference>
<dbReference type="Proteomes" id="UP000008824">
    <property type="component" value="Chromosome"/>
</dbReference>
<dbReference type="GO" id="GO:0008869">
    <property type="term" value="F:galactonate dehydratase activity"/>
    <property type="evidence" value="ECO:0007669"/>
    <property type="project" value="UniProtKB-UniRule"/>
</dbReference>
<dbReference type="GO" id="GO:0000287">
    <property type="term" value="F:magnesium ion binding"/>
    <property type="evidence" value="ECO:0007669"/>
    <property type="project" value="UniProtKB-UniRule"/>
</dbReference>
<dbReference type="GO" id="GO:0009063">
    <property type="term" value="P:amino acid catabolic process"/>
    <property type="evidence" value="ECO:0007669"/>
    <property type="project" value="InterPro"/>
</dbReference>
<dbReference type="GO" id="GO:0034194">
    <property type="term" value="P:D-galactonate catabolic process"/>
    <property type="evidence" value="ECO:0007669"/>
    <property type="project" value="UniProtKB-UniRule"/>
</dbReference>
<dbReference type="CDD" id="cd03325">
    <property type="entry name" value="D-galactonate_dehydratase"/>
    <property type="match status" value="1"/>
</dbReference>
<dbReference type="FunFam" id="3.20.20.120:FF:000008">
    <property type="entry name" value="D-galactonate dehydratase"/>
    <property type="match status" value="1"/>
</dbReference>
<dbReference type="FunFam" id="3.30.390.10:FF:000003">
    <property type="entry name" value="D-galactonate dehydratase"/>
    <property type="match status" value="1"/>
</dbReference>
<dbReference type="Gene3D" id="3.20.20.120">
    <property type="entry name" value="Enolase-like C-terminal domain"/>
    <property type="match status" value="1"/>
</dbReference>
<dbReference type="Gene3D" id="3.30.390.10">
    <property type="entry name" value="Enolase-like, N-terminal domain"/>
    <property type="match status" value="1"/>
</dbReference>
<dbReference type="HAMAP" id="MF_01289">
    <property type="entry name" value="Galacton_dehydrat"/>
    <property type="match status" value="1"/>
</dbReference>
<dbReference type="InterPro" id="IPR034593">
    <property type="entry name" value="DgoD-like"/>
</dbReference>
<dbReference type="InterPro" id="IPR036849">
    <property type="entry name" value="Enolase-like_C_sf"/>
</dbReference>
<dbReference type="InterPro" id="IPR029017">
    <property type="entry name" value="Enolase-like_N"/>
</dbReference>
<dbReference type="InterPro" id="IPR029065">
    <property type="entry name" value="Enolase_C-like"/>
</dbReference>
<dbReference type="InterPro" id="IPR023592">
    <property type="entry name" value="Galactonate_deHydtase"/>
</dbReference>
<dbReference type="InterPro" id="IPR018110">
    <property type="entry name" value="Mandel_Rmase/mucon_lact_enz_CS"/>
</dbReference>
<dbReference type="InterPro" id="IPR013342">
    <property type="entry name" value="Mandelate_racemase_C"/>
</dbReference>
<dbReference type="InterPro" id="IPR013341">
    <property type="entry name" value="Mandelate_racemase_N_dom"/>
</dbReference>
<dbReference type="NCBIfam" id="NF010624">
    <property type="entry name" value="PRK14017.1"/>
    <property type="match status" value="1"/>
</dbReference>
<dbReference type="PANTHER" id="PTHR48080:SF2">
    <property type="entry name" value="D-GALACTONATE DEHYDRATASE"/>
    <property type="match status" value="1"/>
</dbReference>
<dbReference type="PANTHER" id="PTHR48080">
    <property type="entry name" value="D-GALACTONATE DEHYDRATASE-RELATED"/>
    <property type="match status" value="1"/>
</dbReference>
<dbReference type="Pfam" id="PF13378">
    <property type="entry name" value="MR_MLE_C"/>
    <property type="match status" value="1"/>
</dbReference>
<dbReference type="Pfam" id="PF02746">
    <property type="entry name" value="MR_MLE_N"/>
    <property type="match status" value="1"/>
</dbReference>
<dbReference type="SFLD" id="SFLDF00003">
    <property type="entry name" value="D-galactonate_dehydratase"/>
    <property type="match status" value="1"/>
</dbReference>
<dbReference type="SFLD" id="SFLDS00001">
    <property type="entry name" value="Enolase"/>
    <property type="match status" value="1"/>
</dbReference>
<dbReference type="SMART" id="SM00922">
    <property type="entry name" value="MR_MLE"/>
    <property type="match status" value="1"/>
</dbReference>
<dbReference type="SUPFAM" id="SSF51604">
    <property type="entry name" value="Enolase C-terminal domain-like"/>
    <property type="match status" value="1"/>
</dbReference>
<dbReference type="SUPFAM" id="SSF54826">
    <property type="entry name" value="Enolase N-terminal domain-like"/>
    <property type="match status" value="1"/>
</dbReference>
<dbReference type="PROSITE" id="PS00908">
    <property type="entry name" value="MR_MLE_1"/>
    <property type="match status" value="1"/>
</dbReference>
<dbReference type="PROSITE" id="PS00909">
    <property type="entry name" value="MR_MLE_2"/>
    <property type="match status" value="1"/>
</dbReference>
<organism>
    <name type="scientific">Salmonella newport (strain SL254)</name>
    <dbReference type="NCBI Taxonomy" id="423368"/>
    <lineage>
        <taxon>Bacteria</taxon>
        <taxon>Pseudomonadati</taxon>
        <taxon>Pseudomonadota</taxon>
        <taxon>Gammaproteobacteria</taxon>
        <taxon>Enterobacterales</taxon>
        <taxon>Enterobacteriaceae</taxon>
        <taxon>Salmonella</taxon>
    </lineage>
</organism>
<reference key="1">
    <citation type="journal article" date="2011" name="J. Bacteriol.">
        <title>Comparative genomics of 28 Salmonella enterica isolates: evidence for CRISPR-mediated adaptive sublineage evolution.</title>
        <authorList>
            <person name="Fricke W.F."/>
            <person name="Mammel M.K."/>
            <person name="McDermott P.F."/>
            <person name="Tartera C."/>
            <person name="White D.G."/>
            <person name="Leclerc J.E."/>
            <person name="Ravel J."/>
            <person name="Cebula T.A."/>
        </authorList>
    </citation>
    <scope>NUCLEOTIDE SEQUENCE [LARGE SCALE GENOMIC DNA]</scope>
    <source>
        <strain>SL254</strain>
    </source>
</reference>
<proteinExistence type="inferred from homology"/>
<sequence>MKITHITTYRLPPRWMFLKIETDEGVVGWGEPVIEGRARTVEAAVHEFADYLIGKDPARINDLWQVMYRAGFYRGGPIMMSAIAGIDQALWDIKGKVLNAPVWQLMGGLVRDKIKAYSWVGGDRPADVIDGIEKLRGIGFDTFKLNGCEEMGVIDNSRAVDAAVNTVAQIREAFGSEIEFGLDFHGRVSAPMAKVLIKELEPYRPLFIEEPVLAEQAEYYPRLAAQTHIPIAAGERMFSRFEFKRVLDAGGLAILQPDLSHAGGITECYKIAGMAEAYDVALAPHCPLGPIALAACLHIDFVSRNAVFQEQSMGIHYNKGAELLDFVKNKEDFSMDGGFFKPLTKPGLGVDIDEARVIELSKSAPDWRNPLWRHADGSVAEW</sequence>
<keyword id="KW-0456">Lyase</keyword>
<keyword id="KW-0460">Magnesium</keyword>
<keyword id="KW-0479">Metal-binding</keyword>
<feature type="chain" id="PRO_1000140390" description="D-galactonate dehydratase">
    <location>
        <begin position="1"/>
        <end position="382"/>
    </location>
</feature>
<feature type="active site" description="Proton donor" evidence="1">
    <location>
        <position position="185"/>
    </location>
</feature>
<feature type="active site" description="Proton acceptor" evidence="1">
    <location>
        <position position="285"/>
    </location>
</feature>
<feature type="binding site" evidence="2">
    <location>
        <position position="183"/>
    </location>
    <ligand>
        <name>Mg(2+)</name>
        <dbReference type="ChEBI" id="CHEBI:18420"/>
    </ligand>
</feature>
<feature type="binding site" evidence="2">
    <location>
        <position position="209"/>
    </location>
    <ligand>
        <name>Mg(2+)</name>
        <dbReference type="ChEBI" id="CHEBI:18420"/>
    </ligand>
</feature>
<feature type="binding site" evidence="2">
    <location>
        <position position="235"/>
    </location>
    <ligand>
        <name>Mg(2+)</name>
        <dbReference type="ChEBI" id="CHEBI:18420"/>
    </ligand>
</feature>
<feature type="site" description="Increases basicity of active site His" evidence="2">
    <location>
        <position position="258"/>
    </location>
</feature>
<feature type="site" description="Transition state stabilizer" evidence="2">
    <location>
        <position position="310"/>
    </location>
</feature>
<protein>
    <recommendedName>
        <fullName evidence="2">D-galactonate dehydratase</fullName>
        <shortName evidence="2">GalD</shortName>
        <ecNumber evidence="2">4.2.1.6</ecNumber>
    </recommendedName>
</protein>
<evidence type="ECO:0000250" key="1"/>
<evidence type="ECO:0000255" key="2">
    <source>
        <dbReference type="HAMAP-Rule" id="MF_01289"/>
    </source>
</evidence>